<evidence type="ECO:0000255" key="1">
    <source>
        <dbReference type="HAMAP-Rule" id="MF_00211"/>
    </source>
</evidence>
<name>TRPD_BUCBP</name>
<dbReference type="EC" id="2.4.2.18" evidence="1"/>
<dbReference type="EMBL" id="AE016826">
    <property type="protein sequence ID" value="AAO26987.1"/>
    <property type="molecule type" value="Genomic_DNA"/>
</dbReference>
<dbReference type="RefSeq" id="WP_011091388.1">
    <property type="nucleotide sequence ID" value="NC_004545.1"/>
</dbReference>
<dbReference type="SMR" id="P59415"/>
<dbReference type="STRING" id="224915.bbp_260"/>
<dbReference type="KEGG" id="bab:bbp_260"/>
<dbReference type="eggNOG" id="COG0547">
    <property type="taxonomic scope" value="Bacteria"/>
</dbReference>
<dbReference type="HOGENOM" id="CLU_034315_3_0_6"/>
<dbReference type="OrthoDB" id="9806430at2"/>
<dbReference type="UniPathway" id="UPA00035">
    <property type="reaction ID" value="UER00041"/>
</dbReference>
<dbReference type="Proteomes" id="UP000000601">
    <property type="component" value="Chromosome"/>
</dbReference>
<dbReference type="GO" id="GO:0005829">
    <property type="term" value="C:cytosol"/>
    <property type="evidence" value="ECO:0007669"/>
    <property type="project" value="TreeGrafter"/>
</dbReference>
<dbReference type="GO" id="GO:0004048">
    <property type="term" value="F:anthranilate phosphoribosyltransferase activity"/>
    <property type="evidence" value="ECO:0007669"/>
    <property type="project" value="UniProtKB-UniRule"/>
</dbReference>
<dbReference type="GO" id="GO:0000287">
    <property type="term" value="F:magnesium ion binding"/>
    <property type="evidence" value="ECO:0007669"/>
    <property type="project" value="UniProtKB-UniRule"/>
</dbReference>
<dbReference type="GO" id="GO:0000162">
    <property type="term" value="P:L-tryptophan biosynthetic process"/>
    <property type="evidence" value="ECO:0007669"/>
    <property type="project" value="UniProtKB-UniRule"/>
</dbReference>
<dbReference type="Gene3D" id="3.40.1030.10">
    <property type="entry name" value="Nucleoside phosphorylase/phosphoribosyltransferase catalytic domain"/>
    <property type="match status" value="1"/>
</dbReference>
<dbReference type="Gene3D" id="1.20.970.10">
    <property type="entry name" value="Transferase, Pyrimidine Nucleoside Phosphorylase, Chain C"/>
    <property type="match status" value="1"/>
</dbReference>
<dbReference type="HAMAP" id="MF_00211">
    <property type="entry name" value="TrpD"/>
    <property type="match status" value="1"/>
</dbReference>
<dbReference type="InterPro" id="IPR005940">
    <property type="entry name" value="Anthranilate_Pribosyl_Tfrase"/>
</dbReference>
<dbReference type="InterPro" id="IPR000312">
    <property type="entry name" value="Glycosyl_Trfase_fam3"/>
</dbReference>
<dbReference type="InterPro" id="IPR017459">
    <property type="entry name" value="Glycosyl_Trfase_fam3_N_dom"/>
</dbReference>
<dbReference type="InterPro" id="IPR036320">
    <property type="entry name" value="Glycosyl_Trfase_fam3_N_dom_sf"/>
</dbReference>
<dbReference type="InterPro" id="IPR035902">
    <property type="entry name" value="Nuc_phospho_transferase"/>
</dbReference>
<dbReference type="NCBIfam" id="TIGR01245">
    <property type="entry name" value="trpD"/>
    <property type="match status" value="1"/>
</dbReference>
<dbReference type="PANTHER" id="PTHR43285">
    <property type="entry name" value="ANTHRANILATE PHOSPHORIBOSYLTRANSFERASE"/>
    <property type="match status" value="1"/>
</dbReference>
<dbReference type="PANTHER" id="PTHR43285:SF2">
    <property type="entry name" value="ANTHRANILATE PHOSPHORIBOSYLTRANSFERASE"/>
    <property type="match status" value="1"/>
</dbReference>
<dbReference type="Pfam" id="PF02885">
    <property type="entry name" value="Glycos_trans_3N"/>
    <property type="match status" value="1"/>
</dbReference>
<dbReference type="Pfam" id="PF00591">
    <property type="entry name" value="Glycos_transf_3"/>
    <property type="match status" value="1"/>
</dbReference>
<dbReference type="SUPFAM" id="SSF52418">
    <property type="entry name" value="Nucleoside phosphorylase/phosphoribosyltransferase catalytic domain"/>
    <property type="match status" value="1"/>
</dbReference>
<dbReference type="SUPFAM" id="SSF47648">
    <property type="entry name" value="Nucleoside phosphorylase/phosphoribosyltransferase N-terminal domain"/>
    <property type="match status" value="1"/>
</dbReference>
<proteinExistence type="inferred from homology"/>
<sequence>MKIILNKIYQGDTLNISETYTLFKSIMLKKINNIELSAILIALKIRGESQNEILGAVKACLEHMITFPKPTYMFSDIVGTGGDNSNSINISTTSALVGSACGFKIAKHCNGNISSKTGSADILKKFGINIQISPEKSKKMLDELNICFLFAPQYHINFKVVTQVRKILRIKTIFNIIAPLLNPAMPKLTVMGVCNFKLMLPIAQVLKTLNYHHAIIVCSDNIDEVTLHSFTKIIELKNNNITSYILHPDDFGVKYCHKNDILGGNTEENYNIIKKILQGKGPSAVTETIAVNVAILFKIFGYSNLKKNTEYALKVIRSGKVYEKIIQLSKF</sequence>
<protein>
    <recommendedName>
        <fullName evidence="1">Anthranilate phosphoribosyltransferase</fullName>
        <ecNumber evidence="1">2.4.2.18</ecNumber>
    </recommendedName>
</protein>
<feature type="chain" id="PRO_0000154436" description="Anthranilate phosphoribosyltransferase">
    <location>
        <begin position="1"/>
        <end position="331"/>
    </location>
</feature>
<feature type="binding site" evidence="1">
    <location>
        <position position="79"/>
    </location>
    <ligand>
        <name>5-phospho-alpha-D-ribose 1-diphosphate</name>
        <dbReference type="ChEBI" id="CHEBI:58017"/>
    </ligand>
</feature>
<feature type="binding site" evidence="1">
    <location>
        <position position="79"/>
    </location>
    <ligand>
        <name>anthranilate</name>
        <dbReference type="ChEBI" id="CHEBI:16567"/>
        <label>1</label>
    </ligand>
</feature>
<feature type="binding site" evidence="1">
    <location>
        <begin position="82"/>
        <end position="83"/>
    </location>
    <ligand>
        <name>5-phospho-alpha-D-ribose 1-diphosphate</name>
        <dbReference type="ChEBI" id="CHEBI:58017"/>
    </ligand>
</feature>
<feature type="binding site" evidence="1">
    <location>
        <position position="87"/>
    </location>
    <ligand>
        <name>5-phospho-alpha-D-ribose 1-diphosphate</name>
        <dbReference type="ChEBI" id="CHEBI:58017"/>
    </ligand>
</feature>
<feature type="binding site" evidence="1">
    <location>
        <begin position="89"/>
        <end position="92"/>
    </location>
    <ligand>
        <name>5-phospho-alpha-D-ribose 1-diphosphate</name>
        <dbReference type="ChEBI" id="CHEBI:58017"/>
    </ligand>
</feature>
<feature type="binding site" evidence="1">
    <location>
        <position position="91"/>
    </location>
    <ligand>
        <name>Mg(2+)</name>
        <dbReference type="ChEBI" id="CHEBI:18420"/>
        <label>1</label>
    </ligand>
</feature>
<feature type="binding site" evidence="1">
    <location>
        <begin position="107"/>
        <end position="115"/>
    </location>
    <ligand>
        <name>5-phospho-alpha-D-ribose 1-diphosphate</name>
        <dbReference type="ChEBI" id="CHEBI:58017"/>
    </ligand>
</feature>
<feature type="binding site" evidence="1">
    <location>
        <position position="110"/>
    </location>
    <ligand>
        <name>anthranilate</name>
        <dbReference type="ChEBI" id="CHEBI:16567"/>
        <label>1</label>
    </ligand>
</feature>
<feature type="binding site" evidence="1">
    <location>
        <position position="119"/>
    </location>
    <ligand>
        <name>5-phospho-alpha-D-ribose 1-diphosphate</name>
        <dbReference type="ChEBI" id="CHEBI:58017"/>
    </ligand>
</feature>
<feature type="binding site" evidence="1">
    <location>
        <position position="165"/>
    </location>
    <ligand>
        <name>anthranilate</name>
        <dbReference type="ChEBI" id="CHEBI:16567"/>
        <label>2</label>
    </ligand>
</feature>
<feature type="binding site" evidence="1">
    <location>
        <position position="223"/>
    </location>
    <ligand>
        <name>Mg(2+)</name>
        <dbReference type="ChEBI" id="CHEBI:18420"/>
        <label>2</label>
    </ligand>
</feature>
<feature type="binding site" evidence="1">
    <location>
        <position position="224"/>
    </location>
    <ligand>
        <name>Mg(2+)</name>
        <dbReference type="ChEBI" id="CHEBI:18420"/>
        <label>1</label>
    </ligand>
</feature>
<feature type="binding site" evidence="1">
    <location>
        <position position="224"/>
    </location>
    <ligand>
        <name>Mg(2+)</name>
        <dbReference type="ChEBI" id="CHEBI:18420"/>
        <label>2</label>
    </ligand>
</feature>
<comment type="function">
    <text evidence="1">Catalyzes the transfer of the phosphoribosyl group of 5-phosphorylribose-1-pyrophosphate (PRPP) to anthranilate to yield N-(5'-phosphoribosyl)-anthranilate (PRA).</text>
</comment>
<comment type="catalytic activity">
    <reaction evidence="1">
        <text>N-(5-phospho-beta-D-ribosyl)anthranilate + diphosphate = 5-phospho-alpha-D-ribose 1-diphosphate + anthranilate</text>
        <dbReference type="Rhea" id="RHEA:11768"/>
        <dbReference type="ChEBI" id="CHEBI:16567"/>
        <dbReference type="ChEBI" id="CHEBI:18277"/>
        <dbReference type="ChEBI" id="CHEBI:33019"/>
        <dbReference type="ChEBI" id="CHEBI:58017"/>
        <dbReference type="EC" id="2.4.2.18"/>
    </reaction>
</comment>
<comment type="cofactor">
    <cofactor evidence="1">
        <name>Mg(2+)</name>
        <dbReference type="ChEBI" id="CHEBI:18420"/>
    </cofactor>
    <text evidence="1">Binds 2 magnesium ions per monomer.</text>
</comment>
<comment type="pathway">
    <text evidence="1">Amino-acid biosynthesis; L-tryptophan biosynthesis; L-tryptophan from chorismate: step 2/5.</text>
</comment>
<comment type="subunit">
    <text evidence="1">Homodimer.</text>
</comment>
<comment type="similarity">
    <text evidence="1">Belongs to the anthranilate phosphoribosyltransferase family.</text>
</comment>
<accession>P59415</accession>
<gene>
    <name evidence="1" type="primary">trpD</name>
    <name type="ordered locus">bbp_260</name>
</gene>
<organism>
    <name type="scientific">Buchnera aphidicola subsp. Baizongia pistaciae (strain Bp)</name>
    <dbReference type="NCBI Taxonomy" id="224915"/>
    <lineage>
        <taxon>Bacteria</taxon>
        <taxon>Pseudomonadati</taxon>
        <taxon>Pseudomonadota</taxon>
        <taxon>Gammaproteobacteria</taxon>
        <taxon>Enterobacterales</taxon>
        <taxon>Erwiniaceae</taxon>
        <taxon>Buchnera</taxon>
    </lineage>
</organism>
<keyword id="KW-0028">Amino-acid biosynthesis</keyword>
<keyword id="KW-0057">Aromatic amino acid biosynthesis</keyword>
<keyword id="KW-0328">Glycosyltransferase</keyword>
<keyword id="KW-0460">Magnesium</keyword>
<keyword id="KW-0479">Metal-binding</keyword>
<keyword id="KW-1185">Reference proteome</keyword>
<keyword id="KW-0808">Transferase</keyword>
<keyword id="KW-0822">Tryptophan biosynthesis</keyword>
<reference key="1">
    <citation type="journal article" date="2003" name="Proc. Natl. Acad. Sci. U.S.A.">
        <title>Reductive genome evolution in Buchnera aphidicola.</title>
        <authorList>
            <person name="van Ham R.C.H.J."/>
            <person name="Kamerbeek J."/>
            <person name="Palacios C."/>
            <person name="Rausell C."/>
            <person name="Abascal F."/>
            <person name="Bastolla U."/>
            <person name="Fernandez J.M."/>
            <person name="Jimenez L."/>
            <person name="Postigo M."/>
            <person name="Silva F.J."/>
            <person name="Tamames J."/>
            <person name="Viguera E."/>
            <person name="Latorre A."/>
            <person name="Valencia A."/>
            <person name="Moran F."/>
            <person name="Moya A."/>
        </authorList>
    </citation>
    <scope>NUCLEOTIDE SEQUENCE [LARGE SCALE GENOMIC DNA]</scope>
    <source>
        <strain>Bp</strain>
    </source>
</reference>